<sequence length="241" mass="25996">MASNSLMSCGIAAVYPSLLSSSKSKFVSAGVPLPNAGNVGRIRMAAHWMPGEPRPAYLDGSAPGDFGFDPLGLGEVPANLERYKESELIHCRWAMLAVPGILVPEALGYGNWVKAQEWAALPGGQATYLGNPVPWGTLPTILAIEFLAIAFVEHQRSMEKDPEKKKYPGGAFDPLGYSKDPKKLEELKVKEIKNGRLALLAFVGFCVQQSAYPGTGPLENLATHLADPWHNNIGDIVIPFN</sequence>
<reference key="1">
    <citation type="journal article" date="1992" name="Physiol. Plantarum">
        <title>Identification of a single-copy gene encoding a type I chlorophyll a/b-binding polypeptide of photosystem I in Arabidopsis thaliana.</title>
        <authorList>
            <person name="Jensen P.E."/>
            <person name="Kristensen M."/>
            <person name="Lehmbeck J."/>
            <person name="Hoff T."/>
            <person name="Stummann B.M."/>
            <person name="Henningsen K.W."/>
        </authorList>
    </citation>
    <scope>NUCLEOTIDE SEQUENCE [GENOMIC DNA / MRNA]</scope>
    <source>
        <strain>cv. Columbia</strain>
    </source>
</reference>
<reference key="2">
    <citation type="journal article" date="2000" name="Nature">
        <title>Sequence and analysis of chromosome 3 of the plant Arabidopsis thaliana.</title>
        <authorList>
            <person name="Salanoubat M."/>
            <person name="Lemcke K."/>
            <person name="Rieger M."/>
            <person name="Ansorge W."/>
            <person name="Unseld M."/>
            <person name="Fartmann B."/>
            <person name="Valle G."/>
            <person name="Bloecker H."/>
            <person name="Perez-Alonso M."/>
            <person name="Obermaier B."/>
            <person name="Delseny M."/>
            <person name="Boutry M."/>
            <person name="Grivell L.A."/>
            <person name="Mache R."/>
            <person name="Puigdomenech P."/>
            <person name="De Simone V."/>
            <person name="Choisne N."/>
            <person name="Artiguenave F."/>
            <person name="Robert C."/>
            <person name="Brottier P."/>
            <person name="Wincker P."/>
            <person name="Cattolico L."/>
            <person name="Weissenbach J."/>
            <person name="Saurin W."/>
            <person name="Quetier F."/>
            <person name="Schaefer M."/>
            <person name="Mueller-Auer S."/>
            <person name="Gabel C."/>
            <person name="Fuchs M."/>
            <person name="Benes V."/>
            <person name="Wurmbach E."/>
            <person name="Drzonek H."/>
            <person name="Erfle H."/>
            <person name="Jordan N."/>
            <person name="Bangert S."/>
            <person name="Wiedelmann R."/>
            <person name="Kranz H."/>
            <person name="Voss H."/>
            <person name="Holland R."/>
            <person name="Brandt P."/>
            <person name="Nyakatura G."/>
            <person name="Vezzi A."/>
            <person name="D'Angelo M."/>
            <person name="Pallavicini A."/>
            <person name="Toppo S."/>
            <person name="Simionati B."/>
            <person name="Conrad A."/>
            <person name="Hornischer K."/>
            <person name="Kauer G."/>
            <person name="Loehnert T.-H."/>
            <person name="Nordsiek G."/>
            <person name="Reichelt J."/>
            <person name="Scharfe M."/>
            <person name="Schoen O."/>
            <person name="Bargues M."/>
            <person name="Terol J."/>
            <person name="Climent J."/>
            <person name="Navarro P."/>
            <person name="Collado C."/>
            <person name="Perez-Perez A."/>
            <person name="Ottenwaelder B."/>
            <person name="Duchemin D."/>
            <person name="Cooke R."/>
            <person name="Laudie M."/>
            <person name="Berger-Llauro C."/>
            <person name="Purnelle B."/>
            <person name="Masuy D."/>
            <person name="de Haan M."/>
            <person name="Maarse A.C."/>
            <person name="Alcaraz J.-P."/>
            <person name="Cottet A."/>
            <person name="Casacuberta E."/>
            <person name="Monfort A."/>
            <person name="Argiriou A."/>
            <person name="Flores M."/>
            <person name="Liguori R."/>
            <person name="Vitale D."/>
            <person name="Mannhaupt G."/>
            <person name="Haase D."/>
            <person name="Schoof H."/>
            <person name="Rudd S."/>
            <person name="Zaccaria P."/>
            <person name="Mewes H.-W."/>
            <person name="Mayer K.F.X."/>
            <person name="Kaul S."/>
            <person name="Town C.D."/>
            <person name="Koo H.L."/>
            <person name="Tallon L.J."/>
            <person name="Jenkins J."/>
            <person name="Rooney T."/>
            <person name="Rizzo M."/>
            <person name="Walts A."/>
            <person name="Utterback T."/>
            <person name="Fujii C.Y."/>
            <person name="Shea T.P."/>
            <person name="Creasy T.H."/>
            <person name="Haas B."/>
            <person name="Maiti R."/>
            <person name="Wu D."/>
            <person name="Peterson J."/>
            <person name="Van Aken S."/>
            <person name="Pai G."/>
            <person name="Militscher J."/>
            <person name="Sellers P."/>
            <person name="Gill J.E."/>
            <person name="Feldblyum T.V."/>
            <person name="Preuss D."/>
            <person name="Lin X."/>
            <person name="Nierman W.C."/>
            <person name="Salzberg S.L."/>
            <person name="White O."/>
            <person name="Venter J.C."/>
            <person name="Fraser C.M."/>
            <person name="Kaneko T."/>
            <person name="Nakamura Y."/>
            <person name="Sato S."/>
            <person name="Kato T."/>
            <person name="Asamizu E."/>
            <person name="Sasamoto S."/>
            <person name="Kimura T."/>
            <person name="Idesawa K."/>
            <person name="Kawashima K."/>
            <person name="Kishida Y."/>
            <person name="Kiyokawa C."/>
            <person name="Kohara M."/>
            <person name="Matsumoto M."/>
            <person name="Matsuno A."/>
            <person name="Muraki A."/>
            <person name="Nakayama S."/>
            <person name="Nakazaki N."/>
            <person name="Shinpo S."/>
            <person name="Takeuchi C."/>
            <person name="Wada T."/>
            <person name="Watanabe A."/>
            <person name="Yamada M."/>
            <person name="Yasuda M."/>
            <person name="Tabata S."/>
        </authorList>
    </citation>
    <scope>NUCLEOTIDE SEQUENCE [LARGE SCALE GENOMIC DNA]</scope>
    <source>
        <strain>cv. Columbia</strain>
    </source>
</reference>
<reference key="3">
    <citation type="journal article" date="2017" name="Plant J.">
        <title>Araport11: a complete reannotation of the Arabidopsis thaliana reference genome.</title>
        <authorList>
            <person name="Cheng C.Y."/>
            <person name="Krishnakumar V."/>
            <person name="Chan A.P."/>
            <person name="Thibaud-Nissen F."/>
            <person name="Schobel S."/>
            <person name="Town C.D."/>
        </authorList>
    </citation>
    <scope>GENOME REANNOTATION</scope>
    <source>
        <strain>cv. Columbia</strain>
    </source>
</reference>
<reference key="4">
    <citation type="journal article" date="2003" name="Science">
        <title>Empirical analysis of transcriptional activity in the Arabidopsis genome.</title>
        <authorList>
            <person name="Yamada K."/>
            <person name="Lim J."/>
            <person name="Dale J.M."/>
            <person name="Chen H."/>
            <person name="Shinn P."/>
            <person name="Palm C.J."/>
            <person name="Southwick A.M."/>
            <person name="Wu H.C."/>
            <person name="Kim C.J."/>
            <person name="Nguyen M."/>
            <person name="Pham P.K."/>
            <person name="Cheuk R.F."/>
            <person name="Karlin-Newmann G."/>
            <person name="Liu S.X."/>
            <person name="Lam B."/>
            <person name="Sakano H."/>
            <person name="Wu T."/>
            <person name="Yu G."/>
            <person name="Miranda M."/>
            <person name="Quach H.L."/>
            <person name="Tripp M."/>
            <person name="Chang C.H."/>
            <person name="Lee J.M."/>
            <person name="Toriumi M.J."/>
            <person name="Chan M.M."/>
            <person name="Tang C.C."/>
            <person name="Onodera C.S."/>
            <person name="Deng J.M."/>
            <person name="Akiyama K."/>
            <person name="Ansari Y."/>
            <person name="Arakawa T."/>
            <person name="Banh J."/>
            <person name="Banno F."/>
            <person name="Bowser L."/>
            <person name="Brooks S.Y."/>
            <person name="Carninci P."/>
            <person name="Chao Q."/>
            <person name="Choy N."/>
            <person name="Enju A."/>
            <person name="Goldsmith A.D."/>
            <person name="Gurjal M."/>
            <person name="Hansen N.F."/>
            <person name="Hayashizaki Y."/>
            <person name="Johnson-Hopson C."/>
            <person name="Hsuan V.W."/>
            <person name="Iida K."/>
            <person name="Karnes M."/>
            <person name="Khan S."/>
            <person name="Koesema E."/>
            <person name="Ishida J."/>
            <person name="Jiang P.X."/>
            <person name="Jones T."/>
            <person name="Kawai J."/>
            <person name="Kamiya A."/>
            <person name="Meyers C."/>
            <person name="Nakajima M."/>
            <person name="Narusaka M."/>
            <person name="Seki M."/>
            <person name="Sakurai T."/>
            <person name="Satou M."/>
            <person name="Tamse R."/>
            <person name="Vaysberg M."/>
            <person name="Wallender E.K."/>
            <person name="Wong C."/>
            <person name="Yamamura Y."/>
            <person name="Yuan S."/>
            <person name="Shinozaki K."/>
            <person name="Davis R.W."/>
            <person name="Theologis A."/>
            <person name="Ecker J.R."/>
        </authorList>
    </citation>
    <scope>NUCLEOTIDE SEQUENCE [LARGE SCALE MRNA]</scope>
    <source>
        <strain>cv. Columbia</strain>
    </source>
</reference>
<reference key="5">
    <citation type="journal article" date="2009" name="DNA Res.">
        <title>Analysis of multiple occurrences of alternative splicing events in Arabidopsis thaliana using novel sequenced full-length cDNAs.</title>
        <authorList>
            <person name="Iida K."/>
            <person name="Fukami-Kobayashi K."/>
            <person name="Toyoda A."/>
            <person name="Sakaki Y."/>
            <person name="Kobayashi M."/>
            <person name="Seki M."/>
            <person name="Shinozaki K."/>
        </authorList>
    </citation>
    <scope>NUCLEOTIDE SEQUENCE [LARGE SCALE MRNA] OF 83-241</scope>
    <source>
        <strain>cv. Columbia</strain>
    </source>
</reference>
<reference key="6">
    <citation type="journal article" date="1999" name="Trends Plant Sci.">
        <title>A guide to the Lhc genes and their relatives in Arabidopsis.</title>
        <authorList>
            <person name="Jansson S."/>
        </authorList>
    </citation>
    <scope>GENE FAMILY</scope>
    <scope>NOMENCLATURE</scope>
</reference>
<reference key="7">
    <citation type="journal article" date="2000" name="J. Biol. Chem.">
        <title>The PSI-K subunit of photosystem I is involved in the interaction between light-harvesting complex I and the photosystem I reaction center core.</title>
        <authorList>
            <person name="Jensen P.E."/>
            <person name="Gilpin M."/>
            <person name="Knoetzel J."/>
            <person name="Scheller H.V."/>
        </authorList>
    </citation>
    <scope>SUBCELLULAR LOCATION</scope>
    <source>
        <strain>cv. Columbia</strain>
    </source>
</reference>
<reference key="8">
    <citation type="journal article" date="2002" name="Biophys. J.">
        <title>Pigment organization and energy transfer dynamics in isolated photosystem I (PSI) complexes from Arabidopsis thaliana depleted of the PSI-G, PSI-K, PSI-L, or PSI-N subunit.</title>
        <authorList>
            <person name="Ihalainen J.A."/>
            <person name="Jensen P.E."/>
            <person name="Haldrup A."/>
            <person name="van Stokkum I.H.M."/>
            <person name="van Grondelle R."/>
            <person name="Scheller H.V."/>
            <person name="Dekker J.P."/>
        </authorList>
    </citation>
    <scope>REVIEW ON PHOTOSYSTEM I ANTENNA</scope>
</reference>
<reference key="9">
    <citation type="journal article" date="2004" name="Plant Mol. Biol.">
        <title>Lhca5--an LHC-type protein associated with photosystem I.</title>
        <authorList>
            <person name="Ganeteg U."/>
            <person name="Klimmek F."/>
            <person name="Jansson S."/>
        </authorList>
    </citation>
    <scope>INDUCTION BY LIGHT AND COLD</scope>
    <source>
        <strain>cv. C24</strain>
        <strain>cv. Columbia</strain>
    </source>
</reference>
<reference key="10">
    <citation type="journal article" date="2005" name="J. Biol. Chem.">
        <title>Pigment binding, fluorescence properties, and oligomerization behavior of Lhca5, a novel light-harvesting protein.</title>
        <authorList>
            <person name="Storf S."/>
            <person name="Jansson S."/>
            <person name="Schmid V.H.R."/>
        </authorList>
    </citation>
    <scope>INTERACTION WITH LHCA5</scope>
    <scope>MISCELLANEOUS</scope>
    <scope>COFACTOR</scope>
</reference>
<reference key="11">
    <citation type="journal article" date="2011" name="Biochem. J.">
        <title>The light-harvesting complexes of higher-plant Photosystem I: Lhca1/4 and Lhca2/3 form two red-emitting heterodimers.</title>
        <authorList>
            <person name="Wientjes E."/>
            <person name="Croce R."/>
        </authorList>
    </citation>
    <scope>SUBUNIT</scope>
    <scope>COFACTOR</scope>
    <source>
        <strain>cv. Columbia</strain>
    </source>
</reference>
<reference key="12">
    <citation type="journal article" date="2011" name="Biophys. J.">
        <title>The role of the individual Lhcas in photosystem I excitation energy trapping.</title>
        <authorList>
            <person name="Wientjes E."/>
            <person name="van Stokkum I.H.M."/>
            <person name="van Amerongen H."/>
            <person name="Croce R."/>
        </authorList>
    </citation>
    <scope>INTERACTION WITH LHCA5</scope>
    <scope>FUNCTION</scope>
</reference>
<reference key="13">
    <citation type="journal article" date="2007" name="Nature">
        <title>The structure of a plant photosystem I supercomplex at 3.4 A resolution.</title>
        <authorList>
            <person name="Amunts A."/>
            <person name="Drory O."/>
            <person name="Nelson N."/>
        </authorList>
    </citation>
    <scope>X-RAY CRYSTALLOGRAPHY (3.4 ANGSTROMS) OF 49-235</scope>
</reference>
<reference key="14">
    <citation type="journal article" date="2010" name="J. Biol. Chem.">
        <title>Structure determination and improved model of plant photosystem I.</title>
        <authorList>
            <person name="Amunts A."/>
            <person name="Toporik H."/>
            <person name="Borovikova A."/>
            <person name="Nelson N."/>
        </authorList>
    </citation>
    <scope>X-RAY CRYSTALLOGRAPHY (3.3 ANGSTROMS)</scope>
</reference>
<protein>
    <recommendedName>
        <fullName>Chlorophyll a-b binding protein 6, chloroplastic</fullName>
    </recommendedName>
    <alternativeName>
        <fullName>LHCI-730</fullName>
    </alternativeName>
    <alternativeName>
        <fullName>LHCII type III CAB-6</fullName>
    </alternativeName>
    <alternativeName>
        <fullName evidence="8">Light-harvesting complex protein Lhca1</fullName>
    </alternativeName>
</protein>
<comment type="function">
    <text evidence="7">The light-harvesting complex (LHC) functions as a light receptor, it captures and delivers excitation energy to photosystems with which it is closely associated.</text>
</comment>
<comment type="cofactor">
    <text evidence="5 6">Binds at least 14 chlorophylls (8 Chl-a and 6 Chl-b) and carotenoids such as lutein and neoxanthin.</text>
</comment>
<comment type="subunit">
    <text evidence="5 6 7">The LHC complex consists of chlorophyll a-b binding proteins. Red-emitting heterodimer with LHCA4 (PubMed:21083539). Interacts with LHCA5 (PubMed:15563470, PubMed:21806943).</text>
</comment>
<comment type="subcellular location">
    <subcellularLocation>
        <location evidence="3">Plastid</location>
        <location evidence="3">Chloroplast thylakoid membrane</location>
        <topology evidence="2">Multi-pass membrane protein</topology>
    </subcellularLocation>
</comment>
<comment type="alternative products">
    <event type="alternative splicing"/>
    <isoform>
        <id>Q01667-1</id>
        <name>1</name>
        <sequence type="displayed"/>
    </isoform>
    <text>A number of isoforms are produced. According to EST sequences.</text>
</comment>
<comment type="induction">
    <text evidence="4">Induced by low light (LL) but repressed by high light (HL). Inhibited by cold.</text>
</comment>
<comment type="domain">
    <text>The N-terminus of the protein extends into the stroma where it is involved with adhesion of granal membranes and post-translational modifications; both are believed to mediate the distribution of excitation energy between photosystems I and II.</text>
</comment>
<comment type="PTM">
    <text evidence="1">Photoregulated by reversible phosphorylation of its threonine residues.</text>
</comment>
<comment type="miscellaneous">
    <text evidence="5">Light emission at 684 nm upon excitation at 410 and 470 nm.</text>
</comment>
<comment type="similarity">
    <text evidence="9">Belongs to the light-harvesting chlorophyll a/b-binding (LHC) protein family.</text>
</comment>
<keyword id="KW-0002">3D-structure</keyword>
<keyword id="KW-0025">Alternative splicing</keyword>
<keyword id="KW-0148">Chlorophyll</keyword>
<keyword id="KW-0150">Chloroplast</keyword>
<keyword id="KW-0157">Chromophore</keyword>
<keyword id="KW-0460">Magnesium</keyword>
<keyword id="KW-0472">Membrane</keyword>
<keyword id="KW-0479">Metal-binding</keyword>
<keyword id="KW-0597">Phosphoprotein</keyword>
<keyword id="KW-0602">Photosynthesis</keyword>
<keyword id="KW-0603">Photosystem I</keyword>
<keyword id="KW-0934">Plastid</keyword>
<keyword id="KW-1185">Reference proteome</keyword>
<keyword id="KW-0793">Thylakoid</keyword>
<keyword id="KW-0809">Transit peptide</keyword>
<keyword id="KW-0812">Transmembrane</keyword>
<keyword id="KW-1133">Transmembrane helix</keyword>
<organism>
    <name type="scientific">Arabidopsis thaliana</name>
    <name type="common">Mouse-ear cress</name>
    <dbReference type="NCBI Taxonomy" id="3702"/>
    <lineage>
        <taxon>Eukaryota</taxon>
        <taxon>Viridiplantae</taxon>
        <taxon>Streptophyta</taxon>
        <taxon>Embryophyta</taxon>
        <taxon>Tracheophyta</taxon>
        <taxon>Spermatophyta</taxon>
        <taxon>Magnoliopsida</taxon>
        <taxon>eudicotyledons</taxon>
        <taxon>Gunneridae</taxon>
        <taxon>Pentapetalae</taxon>
        <taxon>rosids</taxon>
        <taxon>malvids</taxon>
        <taxon>Brassicales</taxon>
        <taxon>Brassicaceae</taxon>
        <taxon>Camelineae</taxon>
        <taxon>Arabidopsis</taxon>
    </lineage>
</organism>
<name>CAB6_ARATH</name>
<proteinExistence type="evidence at protein level"/>
<evidence type="ECO:0000250" key="1"/>
<evidence type="ECO:0000255" key="2"/>
<evidence type="ECO:0000269" key="3">
    <source>
    </source>
</evidence>
<evidence type="ECO:0000269" key="4">
    <source>
    </source>
</evidence>
<evidence type="ECO:0000269" key="5">
    <source>
    </source>
</evidence>
<evidence type="ECO:0000269" key="6">
    <source>
    </source>
</evidence>
<evidence type="ECO:0000269" key="7">
    <source>
    </source>
</evidence>
<evidence type="ECO:0000303" key="8">
    <source>
    </source>
</evidence>
<evidence type="ECO:0000305" key="9"/>
<evidence type="ECO:0007829" key="10">
    <source>
        <dbReference type="PDB" id="2O01"/>
    </source>
</evidence>
<evidence type="ECO:0007829" key="11">
    <source>
        <dbReference type="PDB" id="2WSC"/>
    </source>
</evidence>
<evidence type="ECO:0007829" key="12">
    <source>
        <dbReference type="PDB" id="4XK8"/>
    </source>
</evidence>
<evidence type="ECO:0007829" key="13">
    <source>
        <dbReference type="PDB" id="6ZOO"/>
    </source>
</evidence>
<evidence type="ECO:0007829" key="14">
    <source>
        <dbReference type="PDB" id="8J6Z"/>
    </source>
</evidence>
<gene>
    <name evidence="8" type="primary">LHCA1</name>
    <name type="synonym">CAB6</name>
    <name type="ordered locus">At3g54890</name>
    <name type="ORF">F28P10.130</name>
</gene>
<accession>Q01667</accession>
<accession>B9DHK2</accession>
<accession>Q9C5R7</accession>
<dbReference type="EMBL" id="M85150">
    <property type="protein sequence ID" value="AAA32759.1"/>
    <property type="molecule type" value="Genomic_DNA"/>
</dbReference>
<dbReference type="EMBL" id="X56062">
    <property type="protein sequence ID" value="CAA39534.1"/>
    <property type="molecule type" value="mRNA"/>
</dbReference>
<dbReference type="EMBL" id="AL049655">
    <property type="protein sequence ID" value="CAB41095.1"/>
    <property type="molecule type" value="Genomic_DNA"/>
</dbReference>
<dbReference type="EMBL" id="CP002686">
    <property type="protein sequence ID" value="AEE79306.1"/>
    <property type="molecule type" value="Genomic_DNA"/>
</dbReference>
<dbReference type="EMBL" id="AF324692">
    <property type="protein sequence ID" value="AAG40043.2"/>
    <property type="molecule type" value="mRNA"/>
</dbReference>
<dbReference type="EMBL" id="AF325016">
    <property type="protein sequence ID" value="AAG40368.1"/>
    <property type="molecule type" value="mRNA"/>
</dbReference>
<dbReference type="EMBL" id="AF326866">
    <property type="protein sequence ID" value="AAG41448.1"/>
    <property type="molecule type" value="mRNA"/>
</dbReference>
<dbReference type="EMBL" id="AF339688">
    <property type="protein sequence ID" value="AAK00370.1"/>
    <property type="molecule type" value="mRNA"/>
</dbReference>
<dbReference type="EMBL" id="AF361847">
    <property type="protein sequence ID" value="AAK32859.1"/>
    <property type="molecule type" value="mRNA"/>
</dbReference>
<dbReference type="EMBL" id="AY070473">
    <property type="protein sequence ID" value="AAL49939.1"/>
    <property type="molecule type" value="mRNA"/>
</dbReference>
<dbReference type="EMBL" id="AY094437">
    <property type="protein sequence ID" value="AAM19809.1"/>
    <property type="molecule type" value="mRNA"/>
</dbReference>
<dbReference type="EMBL" id="BT000852">
    <property type="protein sequence ID" value="AAN38689.1"/>
    <property type="molecule type" value="mRNA"/>
</dbReference>
<dbReference type="EMBL" id="AK317555">
    <property type="protein sequence ID" value="BAH20219.1"/>
    <property type="molecule type" value="mRNA"/>
</dbReference>
<dbReference type="PIR" id="S25435">
    <property type="entry name" value="S25435"/>
</dbReference>
<dbReference type="RefSeq" id="NP_191049.1">
    <molecule id="Q01667-1"/>
    <property type="nucleotide sequence ID" value="NM_115346.4"/>
</dbReference>
<dbReference type="PDB" id="2O01">
    <property type="method" value="X-ray"/>
    <property type="resolution" value="3.40 A"/>
    <property type="chains" value="1=49-235"/>
</dbReference>
<dbReference type="PDB" id="2WSC">
    <property type="method" value="X-ray"/>
    <property type="resolution" value="3.30 A"/>
    <property type="chains" value="1=1-241"/>
</dbReference>
<dbReference type="PDB" id="2WSE">
    <property type="method" value="X-ray"/>
    <property type="resolution" value="3.49 A"/>
    <property type="chains" value="1=1-241"/>
</dbReference>
<dbReference type="PDB" id="2WSF">
    <property type="method" value="X-ray"/>
    <property type="resolution" value="3.48 A"/>
    <property type="chains" value="1=1-241"/>
</dbReference>
<dbReference type="PDB" id="4XK8">
    <property type="method" value="X-ray"/>
    <property type="resolution" value="2.80 A"/>
    <property type="chains" value="1/6=46-240"/>
</dbReference>
<dbReference type="PDB" id="6ZOO">
    <property type="method" value="EM"/>
    <property type="resolution" value="2.74 A"/>
    <property type="chains" value="1=47-239"/>
</dbReference>
<dbReference type="PDB" id="7WFD">
    <property type="method" value="EM"/>
    <property type="resolution" value="3.25 A"/>
    <property type="chains" value="A1=1-241"/>
</dbReference>
<dbReference type="PDB" id="7WFE">
    <property type="method" value="EM"/>
    <property type="resolution" value="3.25 A"/>
    <property type="chains" value="B1=1-241"/>
</dbReference>
<dbReference type="PDB" id="7WG5">
    <property type="method" value="EM"/>
    <property type="resolution" value="3.89 A"/>
    <property type="chains" value="A1/B1=1-241"/>
</dbReference>
<dbReference type="PDB" id="8J6Z">
    <property type="method" value="EM"/>
    <property type="resolution" value="2.79 A"/>
    <property type="chains" value="1=1-241"/>
</dbReference>
<dbReference type="PDB" id="8J7A">
    <property type="method" value="EM"/>
    <property type="resolution" value="3.06 A"/>
    <property type="chains" value="1=1-241"/>
</dbReference>
<dbReference type="PDB" id="8J7B">
    <property type="method" value="EM"/>
    <property type="resolution" value="3.22 A"/>
    <property type="chains" value="1=1-241"/>
</dbReference>
<dbReference type="PDBsum" id="2O01"/>
<dbReference type="PDBsum" id="2WSC"/>
<dbReference type="PDBsum" id="2WSE"/>
<dbReference type="PDBsum" id="2WSF"/>
<dbReference type="PDBsum" id="4XK8"/>
<dbReference type="PDBsum" id="6ZOO"/>
<dbReference type="PDBsum" id="7WFD"/>
<dbReference type="PDBsum" id="7WFE"/>
<dbReference type="PDBsum" id="7WG5"/>
<dbReference type="PDBsum" id="8J6Z"/>
<dbReference type="PDBsum" id="8J7A"/>
<dbReference type="PDBsum" id="8J7B"/>
<dbReference type="EMDB" id="EMD-11326"/>
<dbReference type="EMDB" id="EMD-32462"/>
<dbReference type="EMDB" id="EMD-32463"/>
<dbReference type="EMDB" id="EMD-32477"/>
<dbReference type="EMDB" id="EMD-36021"/>
<dbReference type="EMDB" id="EMD-36036"/>
<dbReference type="EMDB" id="EMD-36037"/>
<dbReference type="SMR" id="Q01667"/>
<dbReference type="BioGRID" id="9970">
    <property type="interactions" value="15"/>
</dbReference>
<dbReference type="DIP" id="DIP-59003N"/>
<dbReference type="FunCoup" id="Q01667">
    <property type="interactions" value="986"/>
</dbReference>
<dbReference type="IntAct" id="Q01667">
    <property type="interactions" value="2"/>
</dbReference>
<dbReference type="STRING" id="3702.Q01667"/>
<dbReference type="PaxDb" id="3702-AT3G54890.1"/>
<dbReference type="ProteomicsDB" id="223859">
    <molecule id="Q01667-1"/>
</dbReference>
<dbReference type="EnsemblPlants" id="AT3G54890.1">
    <molecule id="Q01667-1"/>
    <property type="protein sequence ID" value="AT3G54890.1"/>
    <property type="gene ID" value="AT3G54890"/>
</dbReference>
<dbReference type="GeneID" id="824654"/>
<dbReference type="Gramene" id="AT3G54890.1">
    <molecule id="Q01667-1"/>
    <property type="protein sequence ID" value="AT3G54890.1"/>
    <property type="gene ID" value="AT3G54890"/>
</dbReference>
<dbReference type="KEGG" id="ath:AT3G54890"/>
<dbReference type="Araport" id="AT3G54890"/>
<dbReference type="TAIR" id="AT3G54890">
    <property type="gene designation" value="LHCA1"/>
</dbReference>
<dbReference type="eggNOG" id="ENOG502QTYF">
    <property type="taxonomic scope" value="Eukaryota"/>
</dbReference>
<dbReference type="HOGENOM" id="CLU_057943_5_0_1"/>
<dbReference type="InParanoid" id="Q01667"/>
<dbReference type="OMA" id="MTSDWMP"/>
<dbReference type="OrthoDB" id="423598at2759"/>
<dbReference type="PhylomeDB" id="Q01667"/>
<dbReference type="CD-CODE" id="4299E36E">
    <property type="entry name" value="Nucleolus"/>
</dbReference>
<dbReference type="EvolutionaryTrace" id="Q01667"/>
<dbReference type="PRO" id="PR:Q01667"/>
<dbReference type="Proteomes" id="UP000006548">
    <property type="component" value="Chromosome 3"/>
</dbReference>
<dbReference type="ExpressionAtlas" id="Q01667">
    <property type="expression patterns" value="baseline and differential"/>
</dbReference>
<dbReference type="GO" id="GO:0009507">
    <property type="term" value="C:chloroplast"/>
    <property type="evidence" value="ECO:0007005"/>
    <property type="project" value="TAIR"/>
</dbReference>
<dbReference type="GO" id="GO:0009941">
    <property type="term" value="C:chloroplast envelope"/>
    <property type="evidence" value="ECO:0007005"/>
    <property type="project" value="TAIR"/>
</dbReference>
<dbReference type="GO" id="GO:0009534">
    <property type="term" value="C:chloroplast thylakoid"/>
    <property type="evidence" value="ECO:0007005"/>
    <property type="project" value="TAIR"/>
</dbReference>
<dbReference type="GO" id="GO:0009535">
    <property type="term" value="C:chloroplast thylakoid membrane"/>
    <property type="evidence" value="ECO:0000314"/>
    <property type="project" value="UniProtKB"/>
</dbReference>
<dbReference type="GO" id="GO:0009522">
    <property type="term" value="C:photosystem I"/>
    <property type="evidence" value="ECO:0007669"/>
    <property type="project" value="UniProtKB-KW"/>
</dbReference>
<dbReference type="GO" id="GO:0010287">
    <property type="term" value="C:plastoglobule"/>
    <property type="evidence" value="ECO:0007005"/>
    <property type="project" value="TAIR"/>
</dbReference>
<dbReference type="GO" id="GO:0009579">
    <property type="term" value="C:thylakoid"/>
    <property type="evidence" value="ECO:0007005"/>
    <property type="project" value="TAIR"/>
</dbReference>
<dbReference type="GO" id="GO:0016168">
    <property type="term" value="F:chlorophyll binding"/>
    <property type="evidence" value="ECO:0007669"/>
    <property type="project" value="UniProtKB-KW"/>
</dbReference>
<dbReference type="GO" id="GO:0046872">
    <property type="term" value="F:metal ion binding"/>
    <property type="evidence" value="ECO:0007669"/>
    <property type="project" value="UniProtKB-KW"/>
</dbReference>
<dbReference type="GO" id="GO:0003729">
    <property type="term" value="F:mRNA binding"/>
    <property type="evidence" value="ECO:0000314"/>
    <property type="project" value="TAIR"/>
</dbReference>
<dbReference type="GO" id="GO:0019904">
    <property type="term" value="F:protein domain specific binding"/>
    <property type="evidence" value="ECO:0000353"/>
    <property type="project" value="CAFA"/>
</dbReference>
<dbReference type="GO" id="GO:0009768">
    <property type="term" value="P:photosynthesis, light harvesting in photosystem I"/>
    <property type="evidence" value="ECO:0000314"/>
    <property type="project" value="UniProtKB"/>
</dbReference>
<dbReference type="GO" id="GO:0009409">
    <property type="term" value="P:response to cold"/>
    <property type="evidence" value="ECO:0000270"/>
    <property type="project" value="UniProtKB"/>
</dbReference>
<dbReference type="GO" id="GO:0009644">
    <property type="term" value="P:response to high light intensity"/>
    <property type="evidence" value="ECO:0000270"/>
    <property type="project" value="UniProtKB"/>
</dbReference>
<dbReference type="GO" id="GO:0009645">
    <property type="term" value="P:response to low light intensity stimulus"/>
    <property type="evidence" value="ECO:0000270"/>
    <property type="project" value="UniProtKB"/>
</dbReference>
<dbReference type="FunFam" id="1.10.3460.10:FF:000004">
    <property type="entry name" value="Chlorophyll a-b binding protein, chloroplastic"/>
    <property type="match status" value="1"/>
</dbReference>
<dbReference type="Gene3D" id="1.10.3460.10">
    <property type="entry name" value="Chlorophyll a/b binding protein domain"/>
    <property type="match status" value="1"/>
</dbReference>
<dbReference type="InterPro" id="IPR001344">
    <property type="entry name" value="Chloro_AB-bd_pln"/>
</dbReference>
<dbReference type="InterPro" id="IPR022796">
    <property type="entry name" value="Chloroa_b-bind"/>
</dbReference>
<dbReference type="PANTHER" id="PTHR21649">
    <property type="entry name" value="CHLOROPHYLL A/B BINDING PROTEIN"/>
    <property type="match status" value="1"/>
</dbReference>
<dbReference type="Pfam" id="PF00504">
    <property type="entry name" value="Chloroa_b-bind"/>
    <property type="match status" value="1"/>
</dbReference>
<dbReference type="SUPFAM" id="SSF103511">
    <property type="entry name" value="Chlorophyll a-b binding protein"/>
    <property type="match status" value="1"/>
</dbReference>
<feature type="transit peptide" description="Chloroplast" evidence="2">
    <location>
        <begin position="1"/>
        <end position="35"/>
    </location>
</feature>
<feature type="chain" id="PRO_0000401362" description="Chlorophyll a-b binding protein 6, chloroplastic">
    <location>
        <begin position="36"/>
        <end position="241"/>
    </location>
</feature>
<feature type="transmembrane region" description="Helical" evidence="2">
    <location>
        <begin position="93"/>
        <end position="113"/>
    </location>
</feature>
<feature type="transmembrane region" description="Helical" evidence="2">
    <location>
        <begin position="132"/>
        <end position="152"/>
    </location>
</feature>
<feature type="transmembrane region" description="Helical" evidence="2">
    <location>
        <begin position="197"/>
        <end position="217"/>
    </location>
</feature>
<feature type="binding site" description="axial binding residue" evidence="1">
    <location>
        <position position="48"/>
    </location>
    <ligand>
        <name>chlorophyll b</name>
        <dbReference type="ChEBI" id="CHEBI:61721"/>
        <label>1</label>
    </ligand>
    <ligandPart>
        <name>Mg</name>
        <dbReference type="ChEBI" id="CHEBI:25107"/>
    </ligandPart>
</feature>
<feature type="binding site" evidence="1">
    <location>
        <position position="68"/>
    </location>
    <ligand>
        <name>chlorophyll a</name>
        <dbReference type="ChEBI" id="CHEBI:58416"/>
        <label>1</label>
    </ligand>
</feature>
<feature type="binding site" description="axial binding residue" evidence="1">
    <location>
        <position position="87"/>
    </location>
    <ligand>
        <name>chlorophyll a</name>
        <dbReference type="ChEBI" id="CHEBI:58416"/>
        <label>1</label>
    </ligand>
    <ligandPart>
        <name>Mg</name>
        <dbReference type="ChEBI" id="CHEBI:25107"/>
    </ligandPart>
</feature>
<feature type="binding site" description="axial binding residue" evidence="1">
    <location>
        <position position="90"/>
    </location>
    <ligand>
        <name>chlorophyll a</name>
        <dbReference type="ChEBI" id="CHEBI:58416"/>
        <label>2</label>
    </ligand>
    <ligandPart>
        <name>Mg</name>
        <dbReference type="ChEBI" id="CHEBI:25107"/>
    </ligandPart>
</feature>
<feature type="binding site" evidence="1">
    <location>
        <position position="92"/>
    </location>
    <ligand>
        <name>chlorophyll b</name>
        <dbReference type="ChEBI" id="CHEBI:61721"/>
        <label>2</label>
    </ligand>
</feature>
<feature type="binding site" evidence="1">
    <location>
        <position position="129"/>
    </location>
    <ligand>
        <name>chlorophyll a</name>
        <dbReference type="ChEBI" id="CHEBI:58416"/>
        <label>3</label>
    </ligand>
</feature>
<feature type="binding site" description="axial binding residue" evidence="1">
    <location>
        <position position="133"/>
    </location>
    <ligand>
        <name>chlorophyll b</name>
        <dbReference type="ChEBI" id="CHEBI:61721"/>
        <label>2</label>
    </ligand>
    <ligandPart>
        <name>Mg</name>
        <dbReference type="ChEBI" id="CHEBI:25107"/>
    </ligandPart>
</feature>
<feature type="binding site" description="axial binding residue" evidence="1">
    <location>
        <position position="153"/>
    </location>
    <ligand>
        <name>chlorophyll b</name>
        <dbReference type="ChEBI" id="CHEBI:61721"/>
        <label>3</label>
    </ligand>
    <ligandPart>
        <name>Mg</name>
        <dbReference type="ChEBI" id="CHEBI:25107"/>
    </ligandPart>
</feature>
<feature type="binding site" evidence="1">
    <location>
        <position position="156"/>
    </location>
    <ligand>
        <name>chlorophyll b</name>
        <dbReference type="ChEBI" id="CHEBI:61721"/>
        <label>4</label>
    </ligand>
</feature>
<feature type="binding site" evidence="1">
    <location>
        <position position="190"/>
    </location>
    <ligand>
        <name>chlorophyll a</name>
        <dbReference type="ChEBI" id="CHEBI:58416"/>
        <label>5</label>
    </ligand>
</feature>
<feature type="binding site" description="axial binding residue" evidence="1">
    <location>
        <position position="191"/>
    </location>
    <ligand>
        <name>chlorophyll a</name>
        <dbReference type="ChEBI" id="CHEBI:58416"/>
        <label>3</label>
    </ligand>
    <ligandPart>
        <name>Mg</name>
        <dbReference type="ChEBI" id="CHEBI:25107"/>
    </ligandPart>
</feature>
<feature type="binding site" description="axial binding residue" evidence="1">
    <location>
        <position position="194"/>
    </location>
    <ligand>
        <name>chlorophyll a</name>
        <dbReference type="ChEBI" id="CHEBI:58416"/>
        <label>4</label>
    </ligand>
    <ligandPart>
        <name>Mg</name>
        <dbReference type="ChEBI" id="CHEBI:25107"/>
    </ligandPart>
</feature>
<feature type="binding site" evidence="1">
    <location>
        <position position="196"/>
    </location>
    <ligand>
        <name>chlorophyll a</name>
        <dbReference type="ChEBI" id="CHEBI:58416"/>
        <label>1</label>
    </ligand>
</feature>
<feature type="binding site" description="axial binding residue" evidence="1">
    <location>
        <position position="208"/>
    </location>
    <ligand>
        <name>chlorophyll a</name>
        <dbReference type="ChEBI" id="CHEBI:58416"/>
        <label>5</label>
    </ligand>
    <ligandPart>
        <name>Mg</name>
        <dbReference type="ChEBI" id="CHEBI:25107"/>
    </ligandPart>
</feature>
<feature type="binding site" description="axial binding residue" evidence="1">
    <location>
        <position position="224"/>
    </location>
    <ligand>
        <name>chlorophyll a</name>
        <dbReference type="ChEBI" id="CHEBI:58416"/>
        <label>6</label>
    </ligand>
    <ligandPart>
        <name>Mg</name>
        <dbReference type="ChEBI" id="CHEBI:25107"/>
    </ligandPart>
</feature>
<feature type="sequence conflict" description="In Ref. 4; AAG40043." evidence="9" ref="4">
    <original>I</original>
    <variation>K</variation>
    <location>
        <position position="11"/>
    </location>
</feature>
<feature type="sequence conflict" description="In Ref. 4; AAG40043." evidence="9" ref="4">
    <original>R</original>
    <variation>K</variation>
    <location>
        <position position="43"/>
    </location>
</feature>
<feature type="strand" evidence="10">
    <location>
        <begin position="51"/>
        <end position="53"/>
    </location>
</feature>
<feature type="strand" evidence="10">
    <location>
        <begin position="67"/>
        <end position="69"/>
    </location>
</feature>
<feature type="helix" evidence="12">
    <location>
        <begin position="73"/>
        <end position="75"/>
    </location>
</feature>
<feature type="helix" evidence="13">
    <location>
        <begin position="77"/>
        <end position="106"/>
    </location>
</feature>
<feature type="helix" evidence="13">
    <location>
        <begin position="114"/>
        <end position="116"/>
    </location>
</feature>
<feature type="helix" evidence="13">
    <location>
        <begin position="118"/>
        <end position="120"/>
    </location>
</feature>
<feature type="strand" evidence="11">
    <location>
        <begin position="129"/>
        <end position="131"/>
    </location>
</feature>
<feature type="strand" evidence="11">
    <location>
        <begin position="133"/>
        <end position="137"/>
    </location>
</feature>
<feature type="helix" evidence="13">
    <location>
        <begin position="138"/>
        <end position="157"/>
    </location>
</feature>
<feature type="strand" evidence="10">
    <location>
        <begin position="160"/>
        <end position="163"/>
    </location>
</feature>
<feature type="turn" evidence="13">
    <location>
        <begin position="164"/>
        <end position="166"/>
    </location>
</feature>
<feature type="helix" evidence="13">
    <location>
        <begin position="170"/>
        <end position="172"/>
    </location>
</feature>
<feature type="strand" evidence="11">
    <location>
        <begin position="174"/>
        <end position="176"/>
    </location>
</feature>
<feature type="helix" evidence="14">
    <location>
        <begin position="177"/>
        <end position="179"/>
    </location>
</feature>
<feature type="helix" evidence="13">
    <location>
        <begin position="181"/>
        <end position="211"/>
    </location>
</feature>
<feature type="helix" evidence="13">
    <location>
        <begin position="217"/>
        <end position="226"/>
    </location>
</feature>
<feature type="turn" evidence="13">
    <location>
        <begin position="228"/>
        <end position="230"/>
    </location>
</feature>
<feature type="strand" evidence="13">
    <location>
        <begin position="231"/>
        <end position="233"/>
    </location>
</feature>
<feature type="helix" evidence="13">
    <location>
        <begin position="234"/>
        <end position="237"/>
    </location>
</feature>